<organism>
    <name type="scientific">Archaeoglobus fulgidus (strain ATCC 49558 / DSM 4304 / JCM 9628 / NBRC 100126 / VC-16)</name>
    <dbReference type="NCBI Taxonomy" id="224325"/>
    <lineage>
        <taxon>Archaea</taxon>
        <taxon>Methanobacteriati</taxon>
        <taxon>Methanobacteriota</taxon>
        <taxon>Archaeoglobi</taxon>
        <taxon>Archaeoglobales</taxon>
        <taxon>Archaeoglobaceae</taxon>
        <taxon>Archaeoglobus</taxon>
    </lineage>
</organism>
<keyword id="KW-1003">Cell membrane</keyword>
<keyword id="KW-0472">Membrane</keyword>
<keyword id="KW-1185">Reference proteome</keyword>
<keyword id="KW-0812">Transmembrane</keyword>
<keyword id="KW-1133">Transmembrane helix</keyword>
<keyword id="KW-0813">Transport</keyword>
<feature type="chain" id="PRO_0000111785" description="Uncharacterized membrane protein AF_1755">
    <location>
        <begin position="1"/>
        <end position="219"/>
    </location>
</feature>
<feature type="transmembrane region" description="Helical" evidence="1">
    <location>
        <begin position="14"/>
        <end position="34"/>
    </location>
</feature>
<feature type="transmembrane region" description="Helical" evidence="1">
    <location>
        <begin position="37"/>
        <end position="57"/>
    </location>
</feature>
<feature type="transmembrane region" description="Helical" evidence="1">
    <location>
        <begin position="123"/>
        <end position="143"/>
    </location>
</feature>
<feature type="transmembrane region" description="Helical" evidence="1">
    <location>
        <begin position="155"/>
        <end position="175"/>
    </location>
</feature>
<feature type="transmembrane region" description="Helical" evidence="1">
    <location>
        <begin position="189"/>
        <end position="209"/>
    </location>
</feature>
<protein>
    <recommendedName>
        <fullName>Uncharacterized membrane protein AF_1755</fullName>
    </recommendedName>
</protein>
<gene>
    <name type="ordered locus">AF_1755</name>
</gene>
<accession>O28519</accession>
<name>Y1755_ARCFU</name>
<evidence type="ECO:0000255" key="1"/>
<evidence type="ECO:0000305" key="2"/>
<reference key="1">
    <citation type="journal article" date="1997" name="Nature">
        <title>The complete genome sequence of the hyperthermophilic, sulphate-reducing archaeon Archaeoglobus fulgidus.</title>
        <authorList>
            <person name="Klenk H.-P."/>
            <person name="Clayton R.A."/>
            <person name="Tomb J.-F."/>
            <person name="White O."/>
            <person name="Nelson K.E."/>
            <person name="Ketchum K.A."/>
            <person name="Dodson R.J."/>
            <person name="Gwinn M.L."/>
            <person name="Hickey E.K."/>
            <person name="Peterson J.D."/>
            <person name="Richardson D.L."/>
            <person name="Kerlavage A.R."/>
            <person name="Graham D.E."/>
            <person name="Kyrpides N.C."/>
            <person name="Fleischmann R.D."/>
            <person name="Quackenbush J."/>
            <person name="Lee N.H."/>
            <person name="Sutton G.G."/>
            <person name="Gill S.R."/>
            <person name="Kirkness E.F."/>
            <person name="Dougherty B.A."/>
            <person name="McKenney K."/>
            <person name="Adams M.D."/>
            <person name="Loftus B.J."/>
            <person name="Peterson S.N."/>
            <person name="Reich C.I."/>
            <person name="McNeil L.K."/>
            <person name="Badger J.H."/>
            <person name="Glodek A."/>
            <person name="Zhou L."/>
            <person name="Overbeek R."/>
            <person name="Gocayne J.D."/>
            <person name="Weidman J.F."/>
            <person name="McDonald L.A."/>
            <person name="Utterback T.R."/>
            <person name="Cotton M.D."/>
            <person name="Spriggs T."/>
            <person name="Artiach P."/>
            <person name="Kaine B.P."/>
            <person name="Sykes S.M."/>
            <person name="Sadow P.W."/>
            <person name="D'Andrea K.P."/>
            <person name="Bowman C."/>
            <person name="Fujii C."/>
            <person name="Garland S.A."/>
            <person name="Mason T.M."/>
            <person name="Olsen G.J."/>
            <person name="Fraser C.M."/>
            <person name="Smith H.O."/>
            <person name="Woese C.R."/>
            <person name="Venter J.C."/>
        </authorList>
    </citation>
    <scope>NUCLEOTIDE SEQUENCE [LARGE SCALE GENOMIC DNA]</scope>
    <source>
        <strain>ATCC 49558 / DSM 4304 / JCM 9628 / NBRC 100126 / VC-16</strain>
    </source>
</reference>
<proteinExistence type="inferred from homology"/>
<sequence length="219" mass="23338">MHSLSKSAMFRKGLVYSFPIVMAYIPVAFTFGVLARTLGFSEVEAMLASLLIFAGASQFALITLYSQSLLSAIFIPIFLNLRHIIYSSIIAQKLKLRFPHISAFGLTDEVFAVSVNSAENERFLLGLELGSYSAWVGGTALGVLAGSTLILDRDVYSALVFSISALFLVLLLPNLKGRHVRAAVSGGAVALAFHLLNLTSVGIIAAALAGPLLSGWDGE</sequence>
<dbReference type="EMBL" id="AE000782">
    <property type="protein sequence ID" value="AAB89495.1"/>
    <property type="molecule type" value="Genomic_DNA"/>
</dbReference>
<dbReference type="PIR" id="B69469">
    <property type="entry name" value="B69469"/>
</dbReference>
<dbReference type="STRING" id="224325.AF_1755"/>
<dbReference type="PaxDb" id="224325-AF_1755"/>
<dbReference type="EnsemblBacteria" id="AAB89495">
    <property type="protein sequence ID" value="AAB89495"/>
    <property type="gene ID" value="AF_1755"/>
</dbReference>
<dbReference type="KEGG" id="afu:AF_1755"/>
<dbReference type="eggNOG" id="arCOG04452">
    <property type="taxonomic scope" value="Archaea"/>
</dbReference>
<dbReference type="HOGENOM" id="CLU_065777_3_1_2"/>
<dbReference type="OrthoDB" id="51586at2157"/>
<dbReference type="PhylomeDB" id="O28519"/>
<dbReference type="Proteomes" id="UP000002199">
    <property type="component" value="Chromosome"/>
</dbReference>
<dbReference type="GO" id="GO:0005886">
    <property type="term" value="C:plasma membrane"/>
    <property type="evidence" value="ECO:0007669"/>
    <property type="project" value="UniProtKB-SubCell"/>
</dbReference>
<dbReference type="GO" id="GO:1903785">
    <property type="term" value="P:L-valine transmembrane transport"/>
    <property type="evidence" value="ECO:0007669"/>
    <property type="project" value="TreeGrafter"/>
</dbReference>
<dbReference type="InterPro" id="IPR011606">
    <property type="entry name" value="Brnchd-chn_aa_trnsp_permease"/>
</dbReference>
<dbReference type="PANTHER" id="PTHR34979">
    <property type="entry name" value="INNER MEMBRANE PROTEIN YGAZ"/>
    <property type="match status" value="1"/>
</dbReference>
<dbReference type="PANTHER" id="PTHR34979:SF1">
    <property type="entry name" value="INNER MEMBRANE PROTEIN YGAZ"/>
    <property type="match status" value="1"/>
</dbReference>
<dbReference type="Pfam" id="PF03591">
    <property type="entry name" value="AzlC"/>
    <property type="match status" value="1"/>
</dbReference>
<comment type="subcellular location">
    <subcellularLocation>
        <location evidence="2">Cell membrane</location>
        <topology evidence="2">Multi-pass membrane protein</topology>
    </subcellularLocation>
</comment>
<comment type="similarity">
    <text evidence="2">Belongs to the AzlC family.</text>
</comment>